<organism>
    <name type="scientific">Lycosa singoriensis</name>
    <name type="common">Wolf spider</name>
    <name type="synonym">Aranea singoriensis</name>
    <dbReference type="NCBI Taxonomy" id="434756"/>
    <lineage>
        <taxon>Eukaryota</taxon>
        <taxon>Metazoa</taxon>
        <taxon>Ecdysozoa</taxon>
        <taxon>Arthropoda</taxon>
        <taxon>Chelicerata</taxon>
        <taxon>Arachnida</taxon>
        <taxon>Araneae</taxon>
        <taxon>Araneomorphae</taxon>
        <taxon>Entelegynae</taxon>
        <taxon>Lycosoidea</taxon>
        <taxon>Lycosidae</taxon>
        <taxon>Lycosa</taxon>
    </lineage>
</organism>
<feature type="signal peptide" evidence="2">
    <location>
        <begin position="1"/>
        <end position="20"/>
    </location>
</feature>
<feature type="propeptide" id="PRO_0000401765" evidence="1">
    <location>
        <begin position="21"/>
        <end position="26"/>
    </location>
</feature>
<feature type="chain" id="PRO_0000401766" description="U8-lycotoxin-Ls1a">
    <location>
        <begin position="27"/>
        <end position="77"/>
    </location>
</feature>
<keyword id="KW-1015">Disulfide bond</keyword>
<keyword id="KW-0964">Secreted</keyword>
<keyword id="KW-0732">Signal</keyword>
<keyword id="KW-0800">Toxin</keyword>
<comment type="subcellular location">
    <subcellularLocation>
        <location evidence="1">Secreted</location>
    </subcellularLocation>
</comment>
<comment type="tissue specificity">
    <text>Expressed by the venom gland.</text>
</comment>
<comment type="PTM">
    <text evidence="1">Contains 4 disulfide bonds.</text>
</comment>
<comment type="similarity">
    <text evidence="3">Belongs to the neurotoxin 19 (CSTX) family. 08 (U8-Lctx) subfamily.</text>
</comment>
<comment type="sequence caution" evidence="3">
    <conflict type="erroneous initiation">
        <sequence resource="EMBL-CDS" id="ACI41389"/>
    </conflict>
    <text>Extended N-terminus.</text>
</comment>
<comment type="sequence caution" evidence="3">
    <conflict type="erroneous initiation">
        <sequence resource="EMBL-CDS" id="CAS03658"/>
    </conflict>
    <text>Extended N-terminus.</text>
</comment>
<protein>
    <recommendedName>
        <fullName>U8-lycotoxin-Ls1a</fullName>
    </recommendedName>
    <alternativeName>
        <fullName>Toxin-like structure LSTX-H1</fullName>
    </alternativeName>
    <alternativeName>
        <fullName>Toxin-like structure LSTX-H2</fullName>
    </alternativeName>
</protein>
<name>TX801_LYCSI</name>
<accession>B6DCX2</accession>
<accession>B6DCX3</accession>
<dbReference type="EMBL" id="EU926056">
    <property type="protein sequence ID" value="ACI41388.1"/>
    <property type="molecule type" value="mRNA"/>
</dbReference>
<dbReference type="EMBL" id="EU926057">
    <property type="protein sequence ID" value="ACI41389.1"/>
    <property type="status" value="ALT_INIT"/>
    <property type="molecule type" value="mRNA"/>
</dbReference>
<dbReference type="EMBL" id="FM864060">
    <property type="protein sequence ID" value="CAS03657.1"/>
    <property type="molecule type" value="mRNA"/>
</dbReference>
<dbReference type="EMBL" id="FM864061">
    <property type="protein sequence ID" value="CAS03658.1"/>
    <property type="status" value="ALT_INIT"/>
    <property type="molecule type" value="mRNA"/>
</dbReference>
<dbReference type="SMR" id="B6DCX2"/>
<dbReference type="ArachnoServer" id="AS000995">
    <property type="toxin name" value="U8-lycotoxin-Ls1a"/>
</dbReference>
<dbReference type="GO" id="GO:0005576">
    <property type="term" value="C:extracellular region"/>
    <property type="evidence" value="ECO:0007669"/>
    <property type="project" value="UniProtKB-SubCell"/>
</dbReference>
<dbReference type="GO" id="GO:0090729">
    <property type="term" value="F:toxin activity"/>
    <property type="evidence" value="ECO:0007669"/>
    <property type="project" value="UniProtKB-KW"/>
</dbReference>
<dbReference type="InterPro" id="IPR019553">
    <property type="entry name" value="Spider_toxin_CSTX_knottin"/>
</dbReference>
<dbReference type="Pfam" id="PF10530">
    <property type="entry name" value="Toxin_35"/>
    <property type="match status" value="1"/>
</dbReference>
<proteinExistence type="evidence at transcript level"/>
<sequence length="77" mass="8574">MKLIIFTGLVLFAIVSLIEAQAENEKACLPQYQVCTDAPGNCCSDLVCDCYGRYKCGARIGRNCFCLQKGVIYKREN</sequence>
<evidence type="ECO:0000250" key="1"/>
<evidence type="ECO:0000255" key="2"/>
<evidence type="ECO:0000305" key="3"/>
<reference key="1">
    <citation type="journal article" date="2010" name="Zoology">
        <title>Transcriptome analysis of the venom glands of the Chinese wolf spider Lycosa singoriensis.</title>
        <authorList>
            <person name="Zhang Y."/>
            <person name="Chen J."/>
            <person name="Tang X."/>
            <person name="Wang F."/>
            <person name="Jiang L."/>
            <person name="Xiong X."/>
            <person name="Wang M."/>
            <person name="Rong M."/>
            <person name="Liu Z."/>
            <person name="Liang S."/>
        </authorList>
    </citation>
    <scope>NUCLEOTIDE SEQUENCE [LARGE SCALE MRNA]</scope>
    <source>
        <tissue>Venom gland</tissue>
    </source>
</reference>